<gene>
    <name type="ordered locus">At1g24060</name>
    <name type="ORF">T23E23.21</name>
</gene>
<feature type="signal peptide" evidence="1">
    <location>
        <begin position="1"/>
        <end position="22"/>
    </location>
</feature>
<feature type="chain" id="PRO_0000377040" description="Uncharacterized protein At1g24060">
    <location>
        <begin position="23"/>
        <end position="106"/>
    </location>
</feature>
<feature type="region of interest" description="Disordered" evidence="2">
    <location>
        <begin position="23"/>
        <end position="46"/>
    </location>
</feature>
<keyword id="KW-1185">Reference proteome</keyword>
<keyword id="KW-0732">Signal</keyword>
<proteinExistence type="inferred from homology"/>
<dbReference type="EMBL" id="AC002423">
    <property type="protein sequence ID" value="AAF87150.1"/>
    <property type="status" value="ALT_SEQ"/>
    <property type="molecule type" value="Genomic_DNA"/>
</dbReference>
<dbReference type="EMBL" id="CP002684">
    <property type="protein sequence ID" value="AEE30473.2"/>
    <property type="molecule type" value="Genomic_DNA"/>
</dbReference>
<dbReference type="EMBL" id="DQ446286">
    <property type="protein sequence ID" value="ABE65651.1"/>
    <property type="molecule type" value="mRNA"/>
</dbReference>
<dbReference type="RefSeq" id="NP_173817.2">
    <property type="nucleotide sequence ID" value="NM_102253.2"/>
</dbReference>
<dbReference type="PaxDb" id="3702-AT1G24060.1"/>
<dbReference type="EnsemblPlants" id="AT1G24060.1">
    <property type="protein sequence ID" value="AT1G24060.1"/>
    <property type="gene ID" value="AT1G24060"/>
</dbReference>
<dbReference type="GeneID" id="839018"/>
<dbReference type="Gramene" id="AT1G24060.1">
    <property type="protein sequence ID" value="AT1G24060.1"/>
    <property type="gene ID" value="AT1G24060"/>
</dbReference>
<dbReference type="KEGG" id="ath:AT1G24060"/>
<dbReference type="Araport" id="AT1G24060"/>
<dbReference type="TAIR" id="AT1G24060"/>
<dbReference type="HOGENOM" id="CLU_2029882_0_0_1"/>
<dbReference type="InParanoid" id="Q1PFS7"/>
<dbReference type="OMA" id="WMITITS"/>
<dbReference type="PhylomeDB" id="Q1PFS7"/>
<dbReference type="PRO" id="PR:Q1PFS7"/>
<dbReference type="Proteomes" id="UP000006548">
    <property type="component" value="Chromosome 1"/>
</dbReference>
<dbReference type="ExpressionAtlas" id="Q1PFS7">
    <property type="expression patterns" value="differential"/>
</dbReference>
<reference key="1">
    <citation type="journal article" date="2000" name="Nature">
        <title>Sequence and analysis of chromosome 1 of the plant Arabidopsis thaliana.</title>
        <authorList>
            <person name="Theologis A."/>
            <person name="Ecker J.R."/>
            <person name="Palm C.J."/>
            <person name="Federspiel N.A."/>
            <person name="Kaul S."/>
            <person name="White O."/>
            <person name="Alonso J."/>
            <person name="Altafi H."/>
            <person name="Araujo R."/>
            <person name="Bowman C.L."/>
            <person name="Brooks S.Y."/>
            <person name="Buehler E."/>
            <person name="Chan A."/>
            <person name="Chao Q."/>
            <person name="Chen H."/>
            <person name="Cheuk R.F."/>
            <person name="Chin C.W."/>
            <person name="Chung M.K."/>
            <person name="Conn L."/>
            <person name="Conway A.B."/>
            <person name="Conway A.R."/>
            <person name="Creasy T.H."/>
            <person name="Dewar K."/>
            <person name="Dunn P."/>
            <person name="Etgu P."/>
            <person name="Feldblyum T.V."/>
            <person name="Feng J.-D."/>
            <person name="Fong B."/>
            <person name="Fujii C.Y."/>
            <person name="Gill J.E."/>
            <person name="Goldsmith A.D."/>
            <person name="Haas B."/>
            <person name="Hansen N.F."/>
            <person name="Hughes B."/>
            <person name="Huizar L."/>
            <person name="Hunter J.L."/>
            <person name="Jenkins J."/>
            <person name="Johnson-Hopson C."/>
            <person name="Khan S."/>
            <person name="Khaykin E."/>
            <person name="Kim C.J."/>
            <person name="Koo H.L."/>
            <person name="Kremenetskaia I."/>
            <person name="Kurtz D.B."/>
            <person name="Kwan A."/>
            <person name="Lam B."/>
            <person name="Langin-Hooper S."/>
            <person name="Lee A."/>
            <person name="Lee J.M."/>
            <person name="Lenz C.A."/>
            <person name="Li J.H."/>
            <person name="Li Y.-P."/>
            <person name="Lin X."/>
            <person name="Liu S.X."/>
            <person name="Liu Z.A."/>
            <person name="Luros J.S."/>
            <person name="Maiti R."/>
            <person name="Marziali A."/>
            <person name="Militscher J."/>
            <person name="Miranda M."/>
            <person name="Nguyen M."/>
            <person name="Nierman W.C."/>
            <person name="Osborne B.I."/>
            <person name="Pai G."/>
            <person name="Peterson J."/>
            <person name="Pham P.K."/>
            <person name="Rizzo M."/>
            <person name="Rooney T."/>
            <person name="Rowley D."/>
            <person name="Sakano H."/>
            <person name="Salzberg S.L."/>
            <person name="Schwartz J.R."/>
            <person name="Shinn P."/>
            <person name="Southwick A.M."/>
            <person name="Sun H."/>
            <person name="Tallon L.J."/>
            <person name="Tambunga G."/>
            <person name="Toriumi M.J."/>
            <person name="Town C.D."/>
            <person name="Utterback T."/>
            <person name="Van Aken S."/>
            <person name="Vaysberg M."/>
            <person name="Vysotskaia V.S."/>
            <person name="Walker M."/>
            <person name="Wu D."/>
            <person name="Yu G."/>
            <person name="Fraser C.M."/>
            <person name="Venter J.C."/>
            <person name="Davis R.W."/>
        </authorList>
    </citation>
    <scope>NUCLEOTIDE SEQUENCE [LARGE SCALE GENOMIC DNA]</scope>
    <source>
        <strain>cv. Columbia</strain>
    </source>
</reference>
<reference key="2">
    <citation type="journal article" date="2017" name="Plant J.">
        <title>Araport11: a complete reannotation of the Arabidopsis thaliana reference genome.</title>
        <authorList>
            <person name="Cheng C.Y."/>
            <person name="Krishnakumar V."/>
            <person name="Chan A.P."/>
            <person name="Thibaud-Nissen F."/>
            <person name="Schobel S."/>
            <person name="Town C.D."/>
        </authorList>
    </citation>
    <scope>GENOME REANNOTATION</scope>
    <source>
        <strain>cv. Columbia</strain>
    </source>
</reference>
<reference key="3">
    <citation type="journal article" date="2006" name="Plant Biotechnol. J.">
        <title>Simultaneous high-throughput recombinational cloning of open reading frames in closed and open configurations.</title>
        <authorList>
            <person name="Underwood B.A."/>
            <person name="Vanderhaeghen R."/>
            <person name="Whitford R."/>
            <person name="Town C.D."/>
            <person name="Hilson P."/>
        </authorList>
    </citation>
    <scope>NUCLEOTIDE SEQUENCE [LARGE SCALE MRNA]</scope>
    <source>
        <strain>cv. Columbia</strain>
    </source>
</reference>
<name>Y1406_ARATH</name>
<sequence>MKKHPNLLLGFSVYLSAGTKLTIPPEAEQHTAPSDNNKRKRAKCDDPSMIKITSENNKRTRATCDDPWMITITSDNNKRKRAKYCDDPDYDPDYVKKLKVYKVLKL</sequence>
<organism>
    <name type="scientific">Arabidopsis thaliana</name>
    <name type="common">Mouse-ear cress</name>
    <dbReference type="NCBI Taxonomy" id="3702"/>
    <lineage>
        <taxon>Eukaryota</taxon>
        <taxon>Viridiplantae</taxon>
        <taxon>Streptophyta</taxon>
        <taxon>Embryophyta</taxon>
        <taxon>Tracheophyta</taxon>
        <taxon>Spermatophyta</taxon>
        <taxon>Magnoliopsida</taxon>
        <taxon>eudicotyledons</taxon>
        <taxon>Gunneridae</taxon>
        <taxon>Pentapetalae</taxon>
        <taxon>rosids</taxon>
        <taxon>malvids</taxon>
        <taxon>Brassicales</taxon>
        <taxon>Brassicaceae</taxon>
        <taxon>Camelineae</taxon>
        <taxon>Arabidopsis</taxon>
    </lineage>
</organism>
<accession>Q1PFS7</accession>
<accession>F4I7R2</accession>
<accession>Q9LR89</accession>
<comment type="sequence caution" evidence="3">
    <conflict type="erroneous gene model prediction">
        <sequence resource="EMBL-CDS" id="AAF87150"/>
    </conflict>
    <text>The predicted gene has been split into 2 genes: At1g24060 and At1g24062.</text>
</comment>
<protein>
    <recommendedName>
        <fullName>Uncharacterized protein At1g24060</fullName>
    </recommendedName>
</protein>
<evidence type="ECO:0000255" key="1"/>
<evidence type="ECO:0000256" key="2">
    <source>
        <dbReference type="SAM" id="MobiDB-lite"/>
    </source>
</evidence>
<evidence type="ECO:0000305" key="3"/>